<organism>
    <name type="scientific">Phenylobacterium zucineum (strain HLK1)</name>
    <dbReference type="NCBI Taxonomy" id="450851"/>
    <lineage>
        <taxon>Bacteria</taxon>
        <taxon>Pseudomonadati</taxon>
        <taxon>Pseudomonadota</taxon>
        <taxon>Alphaproteobacteria</taxon>
        <taxon>Caulobacterales</taxon>
        <taxon>Caulobacteraceae</taxon>
        <taxon>Phenylobacterium</taxon>
    </lineage>
</organism>
<dbReference type="EC" id="4.2.1.33" evidence="1"/>
<dbReference type="EMBL" id="CP000747">
    <property type="protein sequence ID" value="ACG76521.1"/>
    <property type="molecule type" value="Genomic_DNA"/>
</dbReference>
<dbReference type="RefSeq" id="WP_012520669.1">
    <property type="nucleotide sequence ID" value="NC_011144.1"/>
</dbReference>
<dbReference type="SMR" id="B4RCC2"/>
<dbReference type="STRING" id="450851.PHZ_c0107"/>
<dbReference type="KEGG" id="pzu:PHZ_c0107"/>
<dbReference type="eggNOG" id="COG0065">
    <property type="taxonomic scope" value="Bacteria"/>
</dbReference>
<dbReference type="HOGENOM" id="CLU_006714_3_4_5"/>
<dbReference type="OrthoDB" id="9802769at2"/>
<dbReference type="UniPathway" id="UPA00048">
    <property type="reaction ID" value="UER00071"/>
</dbReference>
<dbReference type="Proteomes" id="UP000001868">
    <property type="component" value="Chromosome"/>
</dbReference>
<dbReference type="GO" id="GO:0003861">
    <property type="term" value="F:3-isopropylmalate dehydratase activity"/>
    <property type="evidence" value="ECO:0007669"/>
    <property type="project" value="UniProtKB-UniRule"/>
</dbReference>
<dbReference type="GO" id="GO:0051539">
    <property type="term" value="F:4 iron, 4 sulfur cluster binding"/>
    <property type="evidence" value="ECO:0007669"/>
    <property type="project" value="UniProtKB-KW"/>
</dbReference>
<dbReference type="GO" id="GO:0046872">
    <property type="term" value="F:metal ion binding"/>
    <property type="evidence" value="ECO:0007669"/>
    <property type="project" value="UniProtKB-KW"/>
</dbReference>
<dbReference type="GO" id="GO:0009098">
    <property type="term" value="P:L-leucine biosynthetic process"/>
    <property type="evidence" value="ECO:0007669"/>
    <property type="project" value="UniProtKB-UniRule"/>
</dbReference>
<dbReference type="CDD" id="cd01583">
    <property type="entry name" value="IPMI"/>
    <property type="match status" value="1"/>
</dbReference>
<dbReference type="FunFam" id="3.30.499.10:FF:000007">
    <property type="entry name" value="3-isopropylmalate dehydratase large subunit"/>
    <property type="match status" value="1"/>
</dbReference>
<dbReference type="Gene3D" id="3.30.499.10">
    <property type="entry name" value="Aconitase, domain 3"/>
    <property type="match status" value="2"/>
</dbReference>
<dbReference type="HAMAP" id="MF_01026">
    <property type="entry name" value="LeuC_type1"/>
    <property type="match status" value="1"/>
</dbReference>
<dbReference type="InterPro" id="IPR004430">
    <property type="entry name" value="3-IsopropMal_deHydase_lsu"/>
</dbReference>
<dbReference type="InterPro" id="IPR015931">
    <property type="entry name" value="Acnase/IPM_dHydase_lsu_aba_1/3"/>
</dbReference>
<dbReference type="InterPro" id="IPR001030">
    <property type="entry name" value="Acoase/IPM_deHydtase_lsu_aba"/>
</dbReference>
<dbReference type="InterPro" id="IPR018136">
    <property type="entry name" value="Aconitase_4Fe-4S_BS"/>
</dbReference>
<dbReference type="InterPro" id="IPR036008">
    <property type="entry name" value="Aconitase_4Fe-4S_dom"/>
</dbReference>
<dbReference type="InterPro" id="IPR050067">
    <property type="entry name" value="IPM_dehydratase_rel_enz"/>
</dbReference>
<dbReference type="InterPro" id="IPR033941">
    <property type="entry name" value="IPMI_cat"/>
</dbReference>
<dbReference type="NCBIfam" id="TIGR00170">
    <property type="entry name" value="leuC"/>
    <property type="match status" value="1"/>
</dbReference>
<dbReference type="NCBIfam" id="NF004016">
    <property type="entry name" value="PRK05478.1"/>
    <property type="match status" value="1"/>
</dbReference>
<dbReference type="NCBIfam" id="NF009116">
    <property type="entry name" value="PRK12466.1"/>
    <property type="match status" value="1"/>
</dbReference>
<dbReference type="PANTHER" id="PTHR43822:SF9">
    <property type="entry name" value="3-ISOPROPYLMALATE DEHYDRATASE"/>
    <property type="match status" value="1"/>
</dbReference>
<dbReference type="PANTHER" id="PTHR43822">
    <property type="entry name" value="HOMOACONITASE, MITOCHONDRIAL-RELATED"/>
    <property type="match status" value="1"/>
</dbReference>
<dbReference type="Pfam" id="PF00330">
    <property type="entry name" value="Aconitase"/>
    <property type="match status" value="1"/>
</dbReference>
<dbReference type="PRINTS" id="PR00415">
    <property type="entry name" value="ACONITASE"/>
</dbReference>
<dbReference type="SUPFAM" id="SSF53732">
    <property type="entry name" value="Aconitase iron-sulfur domain"/>
    <property type="match status" value="1"/>
</dbReference>
<dbReference type="PROSITE" id="PS00450">
    <property type="entry name" value="ACONITASE_1"/>
    <property type="match status" value="1"/>
</dbReference>
<dbReference type="PROSITE" id="PS01244">
    <property type="entry name" value="ACONITASE_2"/>
    <property type="match status" value="1"/>
</dbReference>
<sequence>MPGKTLYDKIWDAHVVAEQDGEAILYIDLHLIHEVTTPQAFAGLRVAGRPVRRPDRTLAVADHNVPTEGQGLGIDAVADEEARLQLQTLAKNVAEHGIEFFSMGDVRNGIVHVVGPEQGRTQPGMTIVCGDSHTSTHGAFGALAHGIGTSEVEHVLATQTLRQKKAKNMRVRIEGEPAPGVGAKDFALAVIGEIGTAGGTGYVIEYAGSAVRALSMEGRMTLCNLTIEGGAKAGLIAPDEMTYAYLQGRPAAPKGGAWEMALDYWKGFHSDEDAVFDREIVLDAAKIAPTVTWGTSPEDVVAVTGLVPSPDSFGTPDKRASAARALEYMGLTAGQPITEAKVDVVFIGSCTNSRIEDLRAAAAIVAKALEGGRKVAPGVRAMVVPGSGLVREQAEAEGLDEVFKAAGFDWREPGCSMCLGMNPDRLAPGERCASTSNRNFEGRQGRGGRTHLMSPAMAAAAAIAGHIADVREFL</sequence>
<proteinExistence type="inferred from homology"/>
<feature type="chain" id="PRO_1000135701" description="3-isopropylmalate dehydratase large subunit">
    <location>
        <begin position="1"/>
        <end position="474"/>
    </location>
</feature>
<feature type="binding site" evidence="1">
    <location>
        <position position="350"/>
    </location>
    <ligand>
        <name>[4Fe-4S] cluster</name>
        <dbReference type="ChEBI" id="CHEBI:49883"/>
    </ligand>
</feature>
<feature type="binding site" evidence="1">
    <location>
        <position position="415"/>
    </location>
    <ligand>
        <name>[4Fe-4S] cluster</name>
        <dbReference type="ChEBI" id="CHEBI:49883"/>
    </ligand>
</feature>
<feature type="binding site" evidence="1">
    <location>
        <position position="418"/>
    </location>
    <ligand>
        <name>[4Fe-4S] cluster</name>
        <dbReference type="ChEBI" id="CHEBI:49883"/>
    </ligand>
</feature>
<gene>
    <name evidence="1" type="primary">leuC</name>
    <name type="ordered locus">PHZ_c0107</name>
</gene>
<keyword id="KW-0004">4Fe-4S</keyword>
<keyword id="KW-0028">Amino-acid biosynthesis</keyword>
<keyword id="KW-0100">Branched-chain amino acid biosynthesis</keyword>
<keyword id="KW-0408">Iron</keyword>
<keyword id="KW-0411">Iron-sulfur</keyword>
<keyword id="KW-0432">Leucine biosynthesis</keyword>
<keyword id="KW-0456">Lyase</keyword>
<keyword id="KW-0479">Metal-binding</keyword>
<keyword id="KW-1185">Reference proteome</keyword>
<reference key="1">
    <citation type="journal article" date="2008" name="BMC Genomics">
        <title>Complete genome of Phenylobacterium zucineum - a novel facultative intracellular bacterium isolated from human erythroleukemia cell line K562.</title>
        <authorList>
            <person name="Luo Y."/>
            <person name="Xu X."/>
            <person name="Ding Z."/>
            <person name="Liu Z."/>
            <person name="Zhang B."/>
            <person name="Yan Z."/>
            <person name="Sun J."/>
            <person name="Hu S."/>
            <person name="Hu X."/>
        </authorList>
    </citation>
    <scope>NUCLEOTIDE SEQUENCE [LARGE SCALE GENOMIC DNA]</scope>
    <source>
        <strain>HLK1</strain>
    </source>
</reference>
<comment type="function">
    <text evidence="1">Catalyzes the isomerization between 2-isopropylmalate and 3-isopropylmalate, via the formation of 2-isopropylmaleate.</text>
</comment>
<comment type="catalytic activity">
    <reaction evidence="1">
        <text>(2R,3S)-3-isopropylmalate = (2S)-2-isopropylmalate</text>
        <dbReference type="Rhea" id="RHEA:32287"/>
        <dbReference type="ChEBI" id="CHEBI:1178"/>
        <dbReference type="ChEBI" id="CHEBI:35121"/>
        <dbReference type="EC" id="4.2.1.33"/>
    </reaction>
</comment>
<comment type="cofactor">
    <cofactor evidence="1">
        <name>[4Fe-4S] cluster</name>
        <dbReference type="ChEBI" id="CHEBI:49883"/>
    </cofactor>
    <text evidence="1">Binds 1 [4Fe-4S] cluster per subunit.</text>
</comment>
<comment type="pathway">
    <text evidence="1">Amino-acid biosynthesis; L-leucine biosynthesis; L-leucine from 3-methyl-2-oxobutanoate: step 2/4.</text>
</comment>
<comment type="subunit">
    <text evidence="1">Heterodimer of LeuC and LeuD.</text>
</comment>
<comment type="similarity">
    <text evidence="1">Belongs to the aconitase/IPM isomerase family. LeuC type 1 subfamily.</text>
</comment>
<name>LEUC_PHEZH</name>
<accession>B4RCC2</accession>
<evidence type="ECO:0000255" key="1">
    <source>
        <dbReference type="HAMAP-Rule" id="MF_01026"/>
    </source>
</evidence>
<protein>
    <recommendedName>
        <fullName evidence="1">3-isopropylmalate dehydratase large subunit</fullName>
        <ecNumber evidence="1">4.2.1.33</ecNumber>
    </recommendedName>
    <alternativeName>
        <fullName evidence="1">Alpha-IPM isomerase</fullName>
        <shortName evidence="1">IPMI</shortName>
    </alternativeName>
    <alternativeName>
        <fullName evidence="1">Isopropylmalate isomerase</fullName>
    </alternativeName>
</protein>